<name>METK_STRP8</name>
<evidence type="ECO:0000255" key="1">
    <source>
        <dbReference type="HAMAP-Rule" id="MF_00086"/>
    </source>
</evidence>
<accession>Q8P0G6</accession>
<reference key="1">
    <citation type="journal article" date="2002" name="Proc. Natl. Acad. Sci. U.S.A.">
        <title>Genome sequence and comparative microarray analysis of serotype M18 group A Streptococcus strains associated with acute rheumatic fever outbreaks.</title>
        <authorList>
            <person name="Smoot J.C."/>
            <person name="Barbian K.D."/>
            <person name="Van Gompel J.J."/>
            <person name="Smoot L.M."/>
            <person name="Chaussee M.S."/>
            <person name="Sylva G.L."/>
            <person name="Sturdevant D.E."/>
            <person name="Ricklefs S.M."/>
            <person name="Porcella S.F."/>
            <person name="Parkins L.D."/>
            <person name="Beres S.B."/>
            <person name="Campbell D.S."/>
            <person name="Smith T.M."/>
            <person name="Zhang Q."/>
            <person name="Kapur V."/>
            <person name="Daly J.A."/>
            <person name="Veasy L.G."/>
            <person name="Musser J.M."/>
        </authorList>
    </citation>
    <scope>NUCLEOTIDE SEQUENCE [LARGE SCALE GENOMIC DNA]</scope>
    <source>
        <strain>MGAS8232</strain>
    </source>
</reference>
<comment type="function">
    <text evidence="1">Catalyzes the formation of S-adenosylmethionine (AdoMet) from methionine and ATP. The overall synthetic reaction is composed of two sequential steps, AdoMet formation and the subsequent tripolyphosphate hydrolysis which occurs prior to release of AdoMet from the enzyme.</text>
</comment>
<comment type="catalytic activity">
    <reaction evidence="1">
        <text>L-methionine + ATP + H2O = S-adenosyl-L-methionine + phosphate + diphosphate</text>
        <dbReference type="Rhea" id="RHEA:21080"/>
        <dbReference type="ChEBI" id="CHEBI:15377"/>
        <dbReference type="ChEBI" id="CHEBI:30616"/>
        <dbReference type="ChEBI" id="CHEBI:33019"/>
        <dbReference type="ChEBI" id="CHEBI:43474"/>
        <dbReference type="ChEBI" id="CHEBI:57844"/>
        <dbReference type="ChEBI" id="CHEBI:59789"/>
        <dbReference type="EC" id="2.5.1.6"/>
    </reaction>
</comment>
<comment type="cofactor">
    <cofactor evidence="1">
        <name>Mg(2+)</name>
        <dbReference type="ChEBI" id="CHEBI:18420"/>
    </cofactor>
    <text evidence="1">Binds 2 divalent ions per subunit.</text>
</comment>
<comment type="cofactor">
    <cofactor evidence="1">
        <name>K(+)</name>
        <dbReference type="ChEBI" id="CHEBI:29103"/>
    </cofactor>
    <text evidence="1">Binds 1 potassium ion per subunit.</text>
</comment>
<comment type="pathway">
    <text evidence="1">Amino-acid biosynthesis; S-adenosyl-L-methionine biosynthesis; S-adenosyl-L-methionine from L-methionine: step 1/1.</text>
</comment>
<comment type="subunit">
    <text evidence="1">Homotetramer; dimer of dimers.</text>
</comment>
<comment type="subcellular location">
    <subcellularLocation>
        <location evidence="1">Cytoplasm</location>
    </subcellularLocation>
</comment>
<comment type="similarity">
    <text evidence="1">Belongs to the AdoMet synthase family.</text>
</comment>
<gene>
    <name evidence="1" type="primary">metK</name>
    <name type="ordered locus">spyM18_1372</name>
</gene>
<dbReference type="EC" id="2.5.1.6" evidence="1"/>
<dbReference type="EMBL" id="AE009949">
    <property type="protein sequence ID" value="AAL97967.1"/>
    <property type="molecule type" value="Genomic_DNA"/>
</dbReference>
<dbReference type="RefSeq" id="WP_002989292.1">
    <property type="nucleotide sequence ID" value="NC_003485.1"/>
</dbReference>
<dbReference type="SMR" id="Q8P0G6"/>
<dbReference type="GeneID" id="69900671"/>
<dbReference type="KEGG" id="spm:spyM18_1372"/>
<dbReference type="HOGENOM" id="CLU_041802_1_1_9"/>
<dbReference type="UniPathway" id="UPA00315">
    <property type="reaction ID" value="UER00080"/>
</dbReference>
<dbReference type="GO" id="GO:0005737">
    <property type="term" value="C:cytoplasm"/>
    <property type="evidence" value="ECO:0007669"/>
    <property type="project" value="UniProtKB-SubCell"/>
</dbReference>
<dbReference type="GO" id="GO:0005524">
    <property type="term" value="F:ATP binding"/>
    <property type="evidence" value="ECO:0007669"/>
    <property type="project" value="UniProtKB-UniRule"/>
</dbReference>
<dbReference type="GO" id="GO:0000287">
    <property type="term" value="F:magnesium ion binding"/>
    <property type="evidence" value="ECO:0007669"/>
    <property type="project" value="UniProtKB-UniRule"/>
</dbReference>
<dbReference type="GO" id="GO:0004478">
    <property type="term" value="F:methionine adenosyltransferase activity"/>
    <property type="evidence" value="ECO:0007669"/>
    <property type="project" value="UniProtKB-UniRule"/>
</dbReference>
<dbReference type="GO" id="GO:0006730">
    <property type="term" value="P:one-carbon metabolic process"/>
    <property type="evidence" value="ECO:0007669"/>
    <property type="project" value="UniProtKB-KW"/>
</dbReference>
<dbReference type="GO" id="GO:0006556">
    <property type="term" value="P:S-adenosylmethionine biosynthetic process"/>
    <property type="evidence" value="ECO:0007669"/>
    <property type="project" value="UniProtKB-UniRule"/>
</dbReference>
<dbReference type="CDD" id="cd18079">
    <property type="entry name" value="S-AdoMet_synt"/>
    <property type="match status" value="1"/>
</dbReference>
<dbReference type="FunFam" id="3.30.300.10:FF:000003">
    <property type="entry name" value="S-adenosylmethionine synthase"/>
    <property type="match status" value="1"/>
</dbReference>
<dbReference type="Gene3D" id="3.30.300.10">
    <property type="match status" value="3"/>
</dbReference>
<dbReference type="HAMAP" id="MF_00086">
    <property type="entry name" value="S_AdoMet_synth1"/>
    <property type="match status" value="1"/>
</dbReference>
<dbReference type="InterPro" id="IPR022631">
    <property type="entry name" value="ADOMET_SYNTHASE_CS"/>
</dbReference>
<dbReference type="InterPro" id="IPR022630">
    <property type="entry name" value="S-AdoMet_synt_C"/>
</dbReference>
<dbReference type="InterPro" id="IPR022629">
    <property type="entry name" value="S-AdoMet_synt_central"/>
</dbReference>
<dbReference type="InterPro" id="IPR022628">
    <property type="entry name" value="S-AdoMet_synt_N"/>
</dbReference>
<dbReference type="InterPro" id="IPR002133">
    <property type="entry name" value="S-AdoMet_synthetase"/>
</dbReference>
<dbReference type="InterPro" id="IPR022636">
    <property type="entry name" value="S-AdoMet_synthetase_sfam"/>
</dbReference>
<dbReference type="NCBIfam" id="TIGR01034">
    <property type="entry name" value="metK"/>
    <property type="match status" value="1"/>
</dbReference>
<dbReference type="PANTHER" id="PTHR11964">
    <property type="entry name" value="S-ADENOSYLMETHIONINE SYNTHETASE"/>
    <property type="match status" value="1"/>
</dbReference>
<dbReference type="Pfam" id="PF02773">
    <property type="entry name" value="S-AdoMet_synt_C"/>
    <property type="match status" value="1"/>
</dbReference>
<dbReference type="Pfam" id="PF02772">
    <property type="entry name" value="S-AdoMet_synt_M"/>
    <property type="match status" value="1"/>
</dbReference>
<dbReference type="Pfam" id="PF00438">
    <property type="entry name" value="S-AdoMet_synt_N"/>
    <property type="match status" value="1"/>
</dbReference>
<dbReference type="PIRSF" id="PIRSF000497">
    <property type="entry name" value="MAT"/>
    <property type="match status" value="1"/>
</dbReference>
<dbReference type="SUPFAM" id="SSF55973">
    <property type="entry name" value="S-adenosylmethionine synthetase"/>
    <property type="match status" value="3"/>
</dbReference>
<dbReference type="PROSITE" id="PS00376">
    <property type="entry name" value="ADOMET_SYNTHASE_1"/>
    <property type="match status" value="1"/>
</dbReference>
<dbReference type="PROSITE" id="PS00377">
    <property type="entry name" value="ADOMET_SYNTHASE_2"/>
    <property type="match status" value="1"/>
</dbReference>
<feature type="chain" id="PRO_0000174606" description="S-adenosylmethionine synthase">
    <location>
        <begin position="1"/>
        <end position="398"/>
    </location>
</feature>
<feature type="region of interest" description="Flexible loop" evidence="1">
    <location>
        <begin position="100"/>
        <end position="110"/>
    </location>
</feature>
<feature type="binding site" description="in other chain" evidence="1">
    <location>
        <position position="16"/>
    </location>
    <ligand>
        <name>ATP</name>
        <dbReference type="ChEBI" id="CHEBI:30616"/>
        <note>ligand shared between two neighboring subunits</note>
    </ligand>
</feature>
<feature type="binding site" evidence="1">
    <location>
        <position position="18"/>
    </location>
    <ligand>
        <name>Mg(2+)</name>
        <dbReference type="ChEBI" id="CHEBI:18420"/>
    </ligand>
</feature>
<feature type="binding site" evidence="1">
    <location>
        <position position="44"/>
    </location>
    <ligand>
        <name>K(+)</name>
        <dbReference type="ChEBI" id="CHEBI:29103"/>
    </ligand>
</feature>
<feature type="binding site" description="in other chain" evidence="1">
    <location>
        <position position="57"/>
    </location>
    <ligand>
        <name>L-methionine</name>
        <dbReference type="ChEBI" id="CHEBI:57844"/>
        <note>ligand shared between two neighboring subunits</note>
    </ligand>
</feature>
<feature type="binding site" description="in other chain" evidence="1">
    <location>
        <position position="100"/>
    </location>
    <ligand>
        <name>L-methionine</name>
        <dbReference type="ChEBI" id="CHEBI:57844"/>
        <note>ligand shared between two neighboring subunits</note>
    </ligand>
</feature>
<feature type="binding site" description="in other chain" evidence="1">
    <location>
        <begin position="174"/>
        <end position="176"/>
    </location>
    <ligand>
        <name>ATP</name>
        <dbReference type="ChEBI" id="CHEBI:30616"/>
        <note>ligand shared between two neighboring subunits</note>
    </ligand>
</feature>
<feature type="binding site" description="in other chain" evidence="1">
    <location>
        <begin position="241"/>
        <end position="242"/>
    </location>
    <ligand>
        <name>ATP</name>
        <dbReference type="ChEBI" id="CHEBI:30616"/>
        <note>ligand shared between two neighboring subunits</note>
    </ligand>
</feature>
<feature type="binding site" evidence="1">
    <location>
        <position position="250"/>
    </location>
    <ligand>
        <name>ATP</name>
        <dbReference type="ChEBI" id="CHEBI:30616"/>
        <note>ligand shared between two neighboring subunits</note>
    </ligand>
</feature>
<feature type="binding site" evidence="1">
    <location>
        <position position="250"/>
    </location>
    <ligand>
        <name>L-methionine</name>
        <dbReference type="ChEBI" id="CHEBI:57844"/>
        <note>ligand shared between two neighboring subunits</note>
    </ligand>
</feature>
<feature type="binding site" description="in other chain" evidence="1">
    <location>
        <begin position="256"/>
        <end position="257"/>
    </location>
    <ligand>
        <name>ATP</name>
        <dbReference type="ChEBI" id="CHEBI:30616"/>
        <note>ligand shared between two neighboring subunits</note>
    </ligand>
</feature>
<feature type="binding site" evidence="1">
    <location>
        <position position="273"/>
    </location>
    <ligand>
        <name>ATP</name>
        <dbReference type="ChEBI" id="CHEBI:30616"/>
        <note>ligand shared between two neighboring subunits</note>
    </ligand>
</feature>
<feature type="binding site" evidence="1">
    <location>
        <position position="277"/>
    </location>
    <ligand>
        <name>ATP</name>
        <dbReference type="ChEBI" id="CHEBI:30616"/>
        <note>ligand shared between two neighboring subunits</note>
    </ligand>
</feature>
<feature type="binding site" description="in other chain" evidence="1">
    <location>
        <position position="281"/>
    </location>
    <ligand>
        <name>L-methionine</name>
        <dbReference type="ChEBI" id="CHEBI:57844"/>
        <note>ligand shared between two neighboring subunits</note>
    </ligand>
</feature>
<protein>
    <recommendedName>
        <fullName evidence="1">S-adenosylmethionine synthase</fullName>
        <shortName evidence="1">AdoMet synthase</shortName>
        <ecNumber evidence="1">2.5.1.6</ecNumber>
    </recommendedName>
    <alternativeName>
        <fullName evidence="1">MAT</fullName>
    </alternativeName>
    <alternativeName>
        <fullName evidence="1">Methionine adenosyltransferase</fullName>
    </alternativeName>
</protein>
<sequence length="398" mass="43117">MSERKLFTSESVSEGHPDKIADQISDAILDAILAEDPEAHVAAETCVYTGSVHVFGEISTTAYIDINRVVRDTIAEIGYTEAEYGFSAESVGVHPSLVEQSGDIAQGVNEALESREGDTDDLSHIGAGDQGLMFGFAINETPELMPLPISLSHQLVRRLAELRKSGEISYLRPDAKSQVTVEYDEHDKPVRVDTVVISTQHDPEATNDQIRQDVIEKVIKAVIPADYLDDDTKFFINPTGRFVIGGPQGDSGLTGRKIIVDTYGGYSRHGGGAFSGKDATKVDRSASYAARYIAKNLVAAGLATKAEVQLAYAIGVAQPVSVRVDTFGTSTVPEAVLEAAVRQVFDLRPAGIIQMLDLKRPIYKQTAAYGHMGRTDIDLPWERLNKVDALVEAVKTVL</sequence>
<organism>
    <name type="scientific">Streptococcus pyogenes serotype M18 (strain MGAS8232)</name>
    <dbReference type="NCBI Taxonomy" id="186103"/>
    <lineage>
        <taxon>Bacteria</taxon>
        <taxon>Bacillati</taxon>
        <taxon>Bacillota</taxon>
        <taxon>Bacilli</taxon>
        <taxon>Lactobacillales</taxon>
        <taxon>Streptococcaceae</taxon>
        <taxon>Streptococcus</taxon>
    </lineage>
</organism>
<keyword id="KW-0067">ATP-binding</keyword>
<keyword id="KW-0963">Cytoplasm</keyword>
<keyword id="KW-0460">Magnesium</keyword>
<keyword id="KW-0479">Metal-binding</keyword>
<keyword id="KW-0547">Nucleotide-binding</keyword>
<keyword id="KW-0554">One-carbon metabolism</keyword>
<keyword id="KW-0630">Potassium</keyword>
<keyword id="KW-0808">Transferase</keyword>
<proteinExistence type="inferred from homology"/>